<feature type="chain" id="PRO_0000333714" description="3-phenylpropionate/cinnamic acid dioxygenase subunit beta">
    <location>
        <begin position="1"/>
        <end position="172"/>
    </location>
</feature>
<reference key="1">
    <citation type="journal article" date="2005" name="Nucleic Acids Res.">
        <title>Genome dynamics and diversity of Shigella species, the etiologic agents of bacillary dysentery.</title>
        <authorList>
            <person name="Yang F."/>
            <person name="Yang J."/>
            <person name="Zhang X."/>
            <person name="Chen L."/>
            <person name="Jiang Y."/>
            <person name="Yan Y."/>
            <person name="Tang X."/>
            <person name="Wang J."/>
            <person name="Xiong Z."/>
            <person name="Dong J."/>
            <person name="Xue Y."/>
            <person name="Zhu Y."/>
            <person name="Xu X."/>
            <person name="Sun L."/>
            <person name="Chen S."/>
            <person name="Nie H."/>
            <person name="Peng J."/>
            <person name="Xu J."/>
            <person name="Wang Y."/>
            <person name="Yuan Z."/>
            <person name="Wen Y."/>
            <person name="Yao Z."/>
            <person name="Shen Y."/>
            <person name="Qiang B."/>
            <person name="Hou Y."/>
            <person name="Yu J."/>
            <person name="Jin Q."/>
        </authorList>
    </citation>
    <scope>NUCLEOTIDE SEQUENCE [LARGE SCALE GENOMIC DNA]</scope>
    <source>
        <strain>Sb227</strain>
    </source>
</reference>
<name>HCAF_SHIBS</name>
<gene>
    <name evidence="1" type="primary">hcaF</name>
    <name type="ordered locus">SBO_2563</name>
</gene>
<protein>
    <recommendedName>
        <fullName evidence="1">3-phenylpropionate/cinnamic acid dioxygenase subunit beta</fullName>
        <ecNumber evidence="1">1.14.12.19</ecNumber>
    </recommendedName>
</protein>
<dbReference type="EC" id="1.14.12.19" evidence="1"/>
<dbReference type="EMBL" id="CP000036">
    <property type="protein sequence ID" value="ABB67107.1"/>
    <property type="molecule type" value="Genomic_DNA"/>
</dbReference>
<dbReference type="RefSeq" id="WP_001276086.1">
    <property type="nucleotide sequence ID" value="NC_007613.1"/>
</dbReference>
<dbReference type="SMR" id="Q31XV1"/>
<dbReference type="KEGG" id="sbo:SBO_2563"/>
<dbReference type="HOGENOM" id="CLU_102527_1_1_6"/>
<dbReference type="UniPathway" id="UPA00714"/>
<dbReference type="Proteomes" id="UP000007067">
    <property type="component" value="Chromosome"/>
</dbReference>
<dbReference type="GO" id="GO:0008695">
    <property type="term" value="F:3-phenylpropionate dioxygenase activity"/>
    <property type="evidence" value="ECO:0007669"/>
    <property type="project" value="UniProtKB-UniRule"/>
</dbReference>
<dbReference type="GO" id="GO:0019380">
    <property type="term" value="P:3-phenylpropionate catabolic process"/>
    <property type="evidence" value="ECO:0007669"/>
    <property type="project" value="UniProtKB-UniRule"/>
</dbReference>
<dbReference type="CDD" id="cd00667">
    <property type="entry name" value="ring_hydroxylating_dioxygenases_beta"/>
    <property type="match status" value="1"/>
</dbReference>
<dbReference type="Gene3D" id="3.10.450.50">
    <property type="match status" value="1"/>
</dbReference>
<dbReference type="HAMAP" id="MF_01649">
    <property type="entry name" value="HcaF"/>
    <property type="match status" value="1"/>
</dbReference>
<dbReference type="InterPro" id="IPR054881">
    <property type="entry name" value="3PPDioc_HcaF"/>
</dbReference>
<dbReference type="InterPro" id="IPR023712">
    <property type="entry name" value="HcaF"/>
</dbReference>
<dbReference type="InterPro" id="IPR032710">
    <property type="entry name" value="NTF2-like_dom_sf"/>
</dbReference>
<dbReference type="InterPro" id="IPR000391">
    <property type="entry name" value="Rng_hydr_dOase-bsu"/>
</dbReference>
<dbReference type="NCBIfam" id="NF042947">
    <property type="entry name" value="3PPDioc_HcaF"/>
    <property type="match status" value="1"/>
</dbReference>
<dbReference type="NCBIfam" id="NF007479">
    <property type="entry name" value="PRK10069.1"/>
    <property type="match status" value="1"/>
</dbReference>
<dbReference type="PANTHER" id="PTHR41534:SF2">
    <property type="entry name" value="3-PHENYLPROPIONATE_CINNAMIC ACID DIOXYGENASE SUBUNIT BETA"/>
    <property type="match status" value="1"/>
</dbReference>
<dbReference type="PANTHER" id="PTHR41534">
    <property type="entry name" value="BLR3401 PROTEIN"/>
    <property type="match status" value="1"/>
</dbReference>
<dbReference type="Pfam" id="PF00866">
    <property type="entry name" value="Ring_hydroxyl_B"/>
    <property type="match status" value="1"/>
</dbReference>
<dbReference type="SUPFAM" id="SSF54427">
    <property type="entry name" value="NTF2-like"/>
    <property type="match status" value="1"/>
</dbReference>
<accession>Q31XV1</accession>
<evidence type="ECO:0000255" key="1">
    <source>
        <dbReference type="HAMAP-Rule" id="MF_01649"/>
    </source>
</evidence>
<organism>
    <name type="scientific">Shigella boydii serotype 4 (strain Sb227)</name>
    <dbReference type="NCBI Taxonomy" id="300268"/>
    <lineage>
        <taxon>Bacteria</taxon>
        <taxon>Pseudomonadati</taxon>
        <taxon>Pseudomonadota</taxon>
        <taxon>Gammaproteobacteria</taxon>
        <taxon>Enterobacterales</taxon>
        <taxon>Enterobacteriaceae</taxon>
        <taxon>Shigella</taxon>
    </lineage>
</organism>
<sequence>MSAQVSLELHLRISQFLFHEASLLDDWKFRDWLAQLDEEIRYTMRTTVNAQTRDRRKGVQPPTTWIFNDTKDQLERRIARLETGMAWAEEPPSRTRHLISNCQISETDIPNVFAVRVNYLLYQAQKERDETFYVGTRFDKVRRLEDDNWRLLERDIVLDQAVITSHNLSVLF</sequence>
<keyword id="KW-0058">Aromatic hydrocarbons catabolism</keyword>
<keyword id="KW-0223">Dioxygenase</keyword>
<keyword id="KW-0520">NAD</keyword>
<keyword id="KW-0560">Oxidoreductase</keyword>
<proteinExistence type="inferred from homology"/>
<comment type="function">
    <text evidence="1">Part of the multicomponent 3-phenylpropionate dioxygenase. Converts 3-phenylpropionic acid (PP) and cinnamic acid (CI) into 3-phenylpropionate-dihydrodiol (PP-dihydrodiol) and cinnamic acid-dihydrodiol (CI-dihydrodiol), respectively.</text>
</comment>
<comment type="catalytic activity">
    <reaction evidence="1">
        <text>3-phenylpropanoate + NADH + O2 + H(+) = 3-(cis-5,6-dihydroxycyclohexa-1,3-dien-1-yl)propanoate + NAD(+)</text>
        <dbReference type="Rhea" id="RHEA:20357"/>
        <dbReference type="ChEBI" id="CHEBI:15378"/>
        <dbReference type="ChEBI" id="CHEBI:15379"/>
        <dbReference type="ChEBI" id="CHEBI:51057"/>
        <dbReference type="ChEBI" id="CHEBI:57540"/>
        <dbReference type="ChEBI" id="CHEBI:57945"/>
        <dbReference type="ChEBI" id="CHEBI:60087"/>
        <dbReference type="EC" id="1.14.12.19"/>
    </reaction>
</comment>
<comment type="catalytic activity">
    <reaction evidence="1">
        <text>(E)-cinnamate + NADH + O2 + H(+) = (2E)-3-(cis-5,6-dihydroxycyclohexa-1,3-dien-1-yl)prop-2-enoate + NAD(+)</text>
        <dbReference type="Rhea" id="RHEA:25058"/>
        <dbReference type="ChEBI" id="CHEBI:15378"/>
        <dbReference type="ChEBI" id="CHEBI:15379"/>
        <dbReference type="ChEBI" id="CHEBI:15669"/>
        <dbReference type="ChEBI" id="CHEBI:57540"/>
        <dbReference type="ChEBI" id="CHEBI:57945"/>
        <dbReference type="ChEBI" id="CHEBI:61451"/>
        <dbReference type="EC" id="1.14.12.19"/>
    </reaction>
</comment>
<comment type="pathway">
    <text evidence="1">Aromatic compound metabolism; 3-phenylpropanoate degradation.</text>
</comment>
<comment type="subunit">
    <text evidence="1">This dioxygenase system consists of four proteins: the two subunits of the hydroxylase component (HcaE and HcaF), a ferredoxin (HcaC) and a ferredoxin reductase (HcaD).</text>
</comment>
<comment type="similarity">
    <text evidence="1">Belongs to the bacterial ring-hydroxylating dioxygenase beta subunit family.</text>
</comment>